<gene>
    <name evidence="1" type="primary">rlmD</name>
    <name type="synonym">rumA</name>
    <name type="ordered locus">XAC1329</name>
</gene>
<protein>
    <recommendedName>
        <fullName evidence="1">23S rRNA (uracil(1939)-C(5))-methyltransferase RlmD</fullName>
        <ecNumber evidence="1">2.1.1.190</ecNumber>
    </recommendedName>
    <alternativeName>
        <fullName evidence="1">23S rRNA(m5U1939)-methyltransferase</fullName>
    </alternativeName>
</protein>
<comment type="function">
    <text evidence="1">Catalyzes the formation of 5-methyl-uridine at position 1939 (m5U1939) in 23S rRNA.</text>
</comment>
<comment type="catalytic activity">
    <reaction evidence="1">
        <text>uridine(1939) in 23S rRNA + S-adenosyl-L-methionine = 5-methyluridine(1939) in 23S rRNA + S-adenosyl-L-homocysteine + H(+)</text>
        <dbReference type="Rhea" id="RHEA:42908"/>
        <dbReference type="Rhea" id="RHEA-COMP:10278"/>
        <dbReference type="Rhea" id="RHEA-COMP:10279"/>
        <dbReference type="ChEBI" id="CHEBI:15378"/>
        <dbReference type="ChEBI" id="CHEBI:57856"/>
        <dbReference type="ChEBI" id="CHEBI:59789"/>
        <dbReference type="ChEBI" id="CHEBI:65315"/>
        <dbReference type="ChEBI" id="CHEBI:74447"/>
        <dbReference type="EC" id="2.1.1.190"/>
    </reaction>
</comment>
<comment type="similarity">
    <text evidence="1">Belongs to the class I-like SAM-binding methyltransferase superfamily. RNA M5U methyltransferase family. RlmD subfamily.</text>
</comment>
<comment type="sequence caution" evidence="2">
    <conflict type="erroneous initiation">
        <sequence resource="EMBL-CDS" id="AAM36200"/>
    </conflict>
</comment>
<feature type="chain" id="PRO_0000161921" description="23S rRNA (uracil(1939)-C(5))-methyltransferase RlmD">
    <location>
        <begin position="1"/>
        <end position="444"/>
    </location>
</feature>
<feature type="domain" description="TRAM" evidence="1">
    <location>
        <begin position="5"/>
        <end position="67"/>
    </location>
</feature>
<feature type="active site" description="Nucleophile" evidence="1">
    <location>
        <position position="400"/>
    </location>
</feature>
<feature type="binding site" evidence="1">
    <location>
        <position position="80"/>
    </location>
    <ligand>
        <name>[4Fe-4S] cluster</name>
        <dbReference type="ChEBI" id="CHEBI:49883"/>
    </ligand>
</feature>
<feature type="binding site" evidence="1">
    <location>
        <position position="86"/>
    </location>
    <ligand>
        <name>[4Fe-4S] cluster</name>
        <dbReference type="ChEBI" id="CHEBI:49883"/>
    </ligand>
</feature>
<feature type="binding site" evidence="1">
    <location>
        <position position="89"/>
    </location>
    <ligand>
        <name>[4Fe-4S] cluster</name>
        <dbReference type="ChEBI" id="CHEBI:49883"/>
    </ligand>
</feature>
<feature type="binding site" evidence="1">
    <location>
        <position position="168"/>
    </location>
    <ligand>
        <name>[4Fe-4S] cluster</name>
        <dbReference type="ChEBI" id="CHEBI:49883"/>
    </ligand>
</feature>
<feature type="binding site" evidence="1">
    <location>
        <position position="276"/>
    </location>
    <ligand>
        <name>S-adenosyl-L-methionine</name>
        <dbReference type="ChEBI" id="CHEBI:59789"/>
    </ligand>
</feature>
<feature type="binding site" evidence="1">
    <location>
        <position position="305"/>
    </location>
    <ligand>
        <name>S-adenosyl-L-methionine</name>
        <dbReference type="ChEBI" id="CHEBI:59789"/>
    </ligand>
</feature>
<feature type="binding site" evidence="1">
    <location>
        <position position="310"/>
    </location>
    <ligand>
        <name>S-adenosyl-L-methionine</name>
        <dbReference type="ChEBI" id="CHEBI:59789"/>
    </ligand>
</feature>
<feature type="binding site" evidence="1">
    <location>
        <position position="326"/>
    </location>
    <ligand>
        <name>S-adenosyl-L-methionine</name>
        <dbReference type="ChEBI" id="CHEBI:59789"/>
    </ligand>
</feature>
<feature type="binding site" evidence="1">
    <location>
        <position position="353"/>
    </location>
    <ligand>
        <name>S-adenosyl-L-methionine</name>
        <dbReference type="ChEBI" id="CHEBI:59789"/>
    </ligand>
</feature>
<feature type="binding site" evidence="1">
    <location>
        <position position="374"/>
    </location>
    <ligand>
        <name>S-adenosyl-L-methionine</name>
        <dbReference type="ChEBI" id="CHEBI:59789"/>
    </ligand>
</feature>
<sequence length="444" mass="49346">MARTRNRLDRTPFQTAVTDLSHDGRGVARRDGEGGKVTFISGALPGELVRAEPTARSRHFDEAKTVGVLEASPQRVTPRCPHFGVCAGCVLQHLEESQQIVAKQRVLMDNLERIGHVTPQAVLPALTGDNWGYRRKGRFSVRRVEKKDKTLVGFRELDPRFVADLSVCYTVIPQIGEKIPLLAALIEGMDGKRDIPQIEFIAGDDAVALTIRHMQPLSERDRQAWITFAQEHGFAIFLQPGGVDSVQPLWPQEVPLSFRLPQWDVELAFRPLDFIQVNASLNQKMIAHAVALLEAKPDDRVLDLFCGLGNFTLPLARVVREVVGVEGDAGLVARAKENAQRNGLDNAQFYAADLTQDQRSAPWMRQGFDKLLLDPPRSGALEVLQQLPLKTFQRIVYVSCHPGSLARDAGYLVNEQGFTLVSAGAMDMFPHTAHVESIAVFERR</sequence>
<evidence type="ECO:0000255" key="1">
    <source>
        <dbReference type="HAMAP-Rule" id="MF_01010"/>
    </source>
</evidence>
<evidence type="ECO:0000305" key="2"/>
<keyword id="KW-0004">4Fe-4S</keyword>
<keyword id="KW-0408">Iron</keyword>
<keyword id="KW-0411">Iron-sulfur</keyword>
<keyword id="KW-0479">Metal-binding</keyword>
<keyword id="KW-0489">Methyltransferase</keyword>
<keyword id="KW-0698">rRNA processing</keyword>
<keyword id="KW-0949">S-adenosyl-L-methionine</keyword>
<keyword id="KW-0808">Transferase</keyword>
<reference key="1">
    <citation type="journal article" date="2002" name="Nature">
        <title>Comparison of the genomes of two Xanthomonas pathogens with differing host specificities.</title>
        <authorList>
            <person name="da Silva A.C.R."/>
            <person name="Ferro J.A."/>
            <person name="Reinach F.C."/>
            <person name="Farah C.S."/>
            <person name="Furlan L.R."/>
            <person name="Quaggio R.B."/>
            <person name="Monteiro-Vitorello C.B."/>
            <person name="Van Sluys M.A."/>
            <person name="Almeida N.F. Jr."/>
            <person name="Alves L.M.C."/>
            <person name="do Amaral A.M."/>
            <person name="Bertolini M.C."/>
            <person name="Camargo L.E.A."/>
            <person name="Camarotte G."/>
            <person name="Cannavan F."/>
            <person name="Cardozo J."/>
            <person name="Chambergo F."/>
            <person name="Ciapina L.P."/>
            <person name="Cicarelli R.M.B."/>
            <person name="Coutinho L.L."/>
            <person name="Cursino-Santos J.R."/>
            <person name="El-Dorry H."/>
            <person name="Faria J.B."/>
            <person name="Ferreira A.J.S."/>
            <person name="Ferreira R.C.C."/>
            <person name="Ferro M.I.T."/>
            <person name="Formighieri E.F."/>
            <person name="Franco M.C."/>
            <person name="Greggio C.C."/>
            <person name="Gruber A."/>
            <person name="Katsuyama A.M."/>
            <person name="Kishi L.T."/>
            <person name="Leite R.P."/>
            <person name="Lemos E.G.M."/>
            <person name="Lemos M.V.F."/>
            <person name="Locali E.C."/>
            <person name="Machado M.A."/>
            <person name="Madeira A.M.B.N."/>
            <person name="Martinez-Rossi N.M."/>
            <person name="Martins E.C."/>
            <person name="Meidanis J."/>
            <person name="Menck C.F.M."/>
            <person name="Miyaki C.Y."/>
            <person name="Moon D.H."/>
            <person name="Moreira L.M."/>
            <person name="Novo M.T.M."/>
            <person name="Okura V.K."/>
            <person name="Oliveira M.C."/>
            <person name="Oliveira V.R."/>
            <person name="Pereira H.A."/>
            <person name="Rossi A."/>
            <person name="Sena J.A.D."/>
            <person name="Silva C."/>
            <person name="de Souza R.F."/>
            <person name="Spinola L.A.F."/>
            <person name="Takita M.A."/>
            <person name="Tamura R.E."/>
            <person name="Teixeira E.C."/>
            <person name="Tezza R.I.D."/>
            <person name="Trindade dos Santos M."/>
            <person name="Truffi D."/>
            <person name="Tsai S.M."/>
            <person name="White F.F."/>
            <person name="Setubal J.C."/>
            <person name="Kitajima J.P."/>
        </authorList>
    </citation>
    <scope>NUCLEOTIDE SEQUENCE [LARGE SCALE GENOMIC DNA]</scope>
    <source>
        <strain>306</strain>
    </source>
</reference>
<proteinExistence type="inferred from homology"/>
<organism>
    <name type="scientific">Xanthomonas axonopodis pv. citri (strain 306)</name>
    <dbReference type="NCBI Taxonomy" id="190486"/>
    <lineage>
        <taxon>Bacteria</taxon>
        <taxon>Pseudomonadati</taxon>
        <taxon>Pseudomonadota</taxon>
        <taxon>Gammaproteobacteria</taxon>
        <taxon>Lysobacterales</taxon>
        <taxon>Lysobacteraceae</taxon>
        <taxon>Xanthomonas</taxon>
    </lineage>
</organism>
<name>RLMD_XANAC</name>
<accession>Q8PMU6</accession>
<dbReference type="EC" id="2.1.1.190" evidence="1"/>
<dbReference type="EMBL" id="AE008923">
    <property type="protein sequence ID" value="AAM36200.1"/>
    <property type="status" value="ALT_INIT"/>
    <property type="molecule type" value="Genomic_DNA"/>
</dbReference>
<dbReference type="RefSeq" id="WP_005931150.1">
    <property type="nucleotide sequence ID" value="NC_003919.1"/>
</dbReference>
<dbReference type="SMR" id="Q8PMU6"/>
<dbReference type="GeneID" id="66910498"/>
<dbReference type="KEGG" id="xac:XAC1329"/>
<dbReference type="eggNOG" id="COG2265">
    <property type="taxonomic scope" value="Bacteria"/>
</dbReference>
<dbReference type="HOGENOM" id="CLU_014689_8_2_6"/>
<dbReference type="Proteomes" id="UP000000576">
    <property type="component" value="Chromosome"/>
</dbReference>
<dbReference type="GO" id="GO:0051539">
    <property type="term" value="F:4 iron, 4 sulfur cluster binding"/>
    <property type="evidence" value="ECO:0007669"/>
    <property type="project" value="UniProtKB-KW"/>
</dbReference>
<dbReference type="GO" id="GO:0005506">
    <property type="term" value="F:iron ion binding"/>
    <property type="evidence" value="ECO:0007669"/>
    <property type="project" value="UniProtKB-UniRule"/>
</dbReference>
<dbReference type="GO" id="GO:0003723">
    <property type="term" value="F:RNA binding"/>
    <property type="evidence" value="ECO:0007669"/>
    <property type="project" value="InterPro"/>
</dbReference>
<dbReference type="GO" id="GO:0070041">
    <property type="term" value="F:rRNA (uridine-C5-)-methyltransferase activity"/>
    <property type="evidence" value="ECO:0007669"/>
    <property type="project" value="UniProtKB-UniRule"/>
</dbReference>
<dbReference type="GO" id="GO:0070475">
    <property type="term" value="P:rRNA base methylation"/>
    <property type="evidence" value="ECO:0007669"/>
    <property type="project" value="TreeGrafter"/>
</dbReference>
<dbReference type="CDD" id="cd02440">
    <property type="entry name" value="AdoMet_MTases"/>
    <property type="match status" value="1"/>
</dbReference>
<dbReference type="FunFam" id="3.40.50.150:FF:000009">
    <property type="entry name" value="23S rRNA (Uracil(1939)-C(5))-methyltransferase RlmD"/>
    <property type="match status" value="1"/>
</dbReference>
<dbReference type="FunFam" id="2.40.50.1070:FF:000006">
    <property type="entry name" value="23S rRNA (uracil(1939)-C(5))-methyltransferase RlmD"/>
    <property type="match status" value="1"/>
</dbReference>
<dbReference type="FunFam" id="2.40.50.140:FF:000097">
    <property type="entry name" value="23S rRNA (uracil(1939)-C(5))-methyltransferase RlmD"/>
    <property type="match status" value="1"/>
</dbReference>
<dbReference type="Gene3D" id="2.40.50.1070">
    <property type="match status" value="1"/>
</dbReference>
<dbReference type="Gene3D" id="2.40.50.140">
    <property type="entry name" value="Nucleic acid-binding proteins"/>
    <property type="match status" value="1"/>
</dbReference>
<dbReference type="Gene3D" id="3.40.50.150">
    <property type="entry name" value="Vaccinia Virus protein VP39"/>
    <property type="match status" value="1"/>
</dbReference>
<dbReference type="HAMAP" id="MF_01010">
    <property type="entry name" value="23SrRNA_methyltr_RlmD"/>
    <property type="match status" value="1"/>
</dbReference>
<dbReference type="InterPro" id="IPR001566">
    <property type="entry name" value="23S_rRNA_MeTrfase_RlmD"/>
</dbReference>
<dbReference type="InterPro" id="IPR030390">
    <property type="entry name" value="MeTrfase_TrmA_AS"/>
</dbReference>
<dbReference type="InterPro" id="IPR030391">
    <property type="entry name" value="MeTrfase_TrmA_CS"/>
</dbReference>
<dbReference type="InterPro" id="IPR012340">
    <property type="entry name" value="NA-bd_OB-fold"/>
</dbReference>
<dbReference type="InterPro" id="IPR029063">
    <property type="entry name" value="SAM-dependent_MTases_sf"/>
</dbReference>
<dbReference type="InterPro" id="IPR002792">
    <property type="entry name" value="TRAM_dom"/>
</dbReference>
<dbReference type="InterPro" id="IPR010280">
    <property type="entry name" value="U5_MeTrfase_fam"/>
</dbReference>
<dbReference type="NCBIfam" id="NF009639">
    <property type="entry name" value="PRK13168.1"/>
    <property type="match status" value="1"/>
</dbReference>
<dbReference type="NCBIfam" id="TIGR00479">
    <property type="entry name" value="rumA"/>
    <property type="match status" value="1"/>
</dbReference>
<dbReference type="PANTHER" id="PTHR11061:SF49">
    <property type="entry name" value="23S RRNA (URACIL(1939)-C(5))-METHYLTRANSFERASE RLMD"/>
    <property type="match status" value="1"/>
</dbReference>
<dbReference type="PANTHER" id="PTHR11061">
    <property type="entry name" value="RNA M5U METHYLTRANSFERASE"/>
    <property type="match status" value="1"/>
</dbReference>
<dbReference type="Pfam" id="PF05958">
    <property type="entry name" value="tRNA_U5-meth_tr"/>
    <property type="match status" value="1"/>
</dbReference>
<dbReference type="SUPFAM" id="SSF50249">
    <property type="entry name" value="Nucleic acid-binding proteins"/>
    <property type="match status" value="1"/>
</dbReference>
<dbReference type="SUPFAM" id="SSF53335">
    <property type="entry name" value="S-adenosyl-L-methionine-dependent methyltransferases"/>
    <property type="match status" value="1"/>
</dbReference>
<dbReference type="PROSITE" id="PS51687">
    <property type="entry name" value="SAM_MT_RNA_M5U"/>
    <property type="match status" value="1"/>
</dbReference>
<dbReference type="PROSITE" id="PS50926">
    <property type="entry name" value="TRAM"/>
    <property type="match status" value="1"/>
</dbReference>
<dbReference type="PROSITE" id="PS01230">
    <property type="entry name" value="TRMA_1"/>
    <property type="match status" value="1"/>
</dbReference>
<dbReference type="PROSITE" id="PS01231">
    <property type="entry name" value="TRMA_2"/>
    <property type="match status" value="1"/>
</dbReference>